<dbReference type="EMBL" id="AE014299">
    <property type="protein sequence ID" value="AAN55369.1"/>
    <property type="molecule type" value="Genomic_DNA"/>
</dbReference>
<dbReference type="RefSeq" id="NP_717925.1">
    <property type="nucleotide sequence ID" value="NC_004347.2"/>
</dbReference>
<dbReference type="RefSeq" id="WP_011072326.1">
    <property type="nucleotide sequence ID" value="NC_004347.2"/>
</dbReference>
<dbReference type="SMR" id="Q8EEP2"/>
<dbReference type="STRING" id="211586.SO_2335"/>
<dbReference type="PaxDb" id="211586-SO_2335"/>
<dbReference type="KEGG" id="son:SO_2335"/>
<dbReference type="PATRIC" id="fig|211586.12.peg.2249"/>
<dbReference type="eggNOG" id="COG3057">
    <property type="taxonomic scope" value="Bacteria"/>
</dbReference>
<dbReference type="HOGENOM" id="CLU_099733_0_0_6"/>
<dbReference type="OrthoDB" id="5591069at2"/>
<dbReference type="PhylomeDB" id="Q8EEP2"/>
<dbReference type="BioCyc" id="SONE211586:G1GMP-2133-MONOMER"/>
<dbReference type="Proteomes" id="UP000008186">
    <property type="component" value="Chromosome"/>
</dbReference>
<dbReference type="GO" id="GO:0005737">
    <property type="term" value="C:cytoplasm"/>
    <property type="evidence" value="ECO:0007669"/>
    <property type="project" value="UniProtKB-SubCell"/>
</dbReference>
<dbReference type="GO" id="GO:0003677">
    <property type="term" value="F:DNA binding"/>
    <property type="evidence" value="ECO:0007669"/>
    <property type="project" value="UniProtKB-UniRule"/>
</dbReference>
<dbReference type="GO" id="GO:0032297">
    <property type="term" value="P:negative regulation of DNA-templated DNA replication initiation"/>
    <property type="evidence" value="ECO:0007669"/>
    <property type="project" value="UniProtKB-UniRule"/>
</dbReference>
<dbReference type="GO" id="GO:0006355">
    <property type="term" value="P:regulation of DNA-templated transcription"/>
    <property type="evidence" value="ECO:0007669"/>
    <property type="project" value="InterPro"/>
</dbReference>
<dbReference type="Gene3D" id="1.10.1220.10">
    <property type="entry name" value="Met repressor-like"/>
    <property type="match status" value="1"/>
</dbReference>
<dbReference type="Gene3D" id="1.20.1380.10">
    <property type="entry name" value="Replication modulator SeqA, C-terminal DNA-binding domain"/>
    <property type="match status" value="1"/>
</dbReference>
<dbReference type="HAMAP" id="MF_00908">
    <property type="entry name" value="SeqA"/>
    <property type="match status" value="1"/>
</dbReference>
<dbReference type="InterPro" id="IPR013321">
    <property type="entry name" value="Arc_rbn_hlx_hlx"/>
</dbReference>
<dbReference type="InterPro" id="IPR010985">
    <property type="entry name" value="Ribbon_hlx_hlx"/>
</dbReference>
<dbReference type="InterPro" id="IPR005621">
    <property type="entry name" value="SeqA"/>
</dbReference>
<dbReference type="InterPro" id="IPR026577">
    <property type="entry name" value="SeqA_DNA-bd_C"/>
</dbReference>
<dbReference type="InterPro" id="IPR036835">
    <property type="entry name" value="SeqA_DNA-bd_C_sf"/>
</dbReference>
<dbReference type="InterPro" id="IPR033761">
    <property type="entry name" value="SeqA_N"/>
</dbReference>
<dbReference type="NCBIfam" id="NF008389">
    <property type="entry name" value="PRK11187.1"/>
    <property type="match status" value="1"/>
</dbReference>
<dbReference type="Pfam" id="PF03925">
    <property type="entry name" value="SeqA"/>
    <property type="match status" value="1"/>
</dbReference>
<dbReference type="Pfam" id="PF17206">
    <property type="entry name" value="SeqA_N"/>
    <property type="match status" value="1"/>
</dbReference>
<dbReference type="PIRSF" id="PIRSF019401">
    <property type="entry name" value="SeqA"/>
    <property type="match status" value="1"/>
</dbReference>
<dbReference type="SUPFAM" id="SSF82808">
    <property type="entry name" value="Replication modulator SeqA, C-terminal DNA-binding domain"/>
    <property type="match status" value="1"/>
</dbReference>
<dbReference type="SUPFAM" id="SSF47598">
    <property type="entry name" value="Ribbon-helix-helix"/>
    <property type="match status" value="1"/>
</dbReference>
<gene>
    <name evidence="1" type="primary">seqA</name>
    <name type="ordered locus">SO_2335</name>
</gene>
<accession>Q8EEP2</accession>
<comment type="function">
    <text evidence="1">Negative regulator of replication initiation, which contributes to regulation of DNA replication and ensures that replication initiation occurs exactly once per chromosome per cell cycle. Binds to pairs of hemimethylated GATC sequences in the oriC region, thus preventing assembly of replication proteins and re-initiation at newly replicated origins. Repression is relieved when the region becomes fully methylated.</text>
</comment>
<comment type="subunit">
    <text evidence="1">Homodimer. Polymerizes to form helical filaments.</text>
</comment>
<comment type="subcellular location">
    <subcellularLocation>
        <location evidence="1">Cytoplasm</location>
    </subcellularLocation>
</comment>
<comment type="similarity">
    <text evidence="1">Belongs to the SeqA family.</text>
</comment>
<name>SEQA_SHEON</name>
<organism>
    <name type="scientific">Shewanella oneidensis (strain ATCC 700550 / JCM 31522 / CIP 106686 / LMG 19005 / NCIMB 14063 / MR-1)</name>
    <dbReference type="NCBI Taxonomy" id="211586"/>
    <lineage>
        <taxon>Bacteria</taxon>
        <taxon>Pseudomonadati</taxon>
        <taxon>Pseudomonadota</taxon>
        <taxon>Gammaproteobacteria</taxon>
        <taxon>Alteromonadales</taxon>
        <taxon>Shewanellaceae</taxon>
        <taxon>Shewanella</taxon>
    </lineage>
</organism>
<reference key="1">
    <citation type="journal article" date="2002" name="Nat. Biotechnol.">
        <title>Genome sequence of the dissimilatory metal ion-reducing bacterium Shewanella oneidensis.</title>
        <authorList>
            <person name="Heidelberg J.F."/>
            <person name="Paulsen I.T."/>
            <person name="Nelson K.E."/>
            <person name="Gaidos E.J."/>
            <person name="Nelson W.C."/>
            <person name="Read T.D."/>
            <person name="Eisen J.A."/>
            <person name="Seshadri R."/>
            <person name="Ward N.L."/>
            <person name="Methe B.A."/>
            <person name="Clayton R.A."/>
            <person name="Meyer T."/>
            <person name="Tsapin A."/>
            <person name="Scott J."/>
            <person name="Beanan M.J."/>
            <person name="Brinkac L.M."/>
            <person name="Daugherty S.C."/>
            <person name="DeBoy R.T."/>
            <person name="Dodson R.J."/>
            <person name="Durkin A.S."/>
            <person name="Haft D.H."/>
            <person name="Kolonay J.F."/>
            <person name="Madupu R."/>
            <person name="Peterson J.D."/>
            <person name="Umayam L.A."/>
            <person name="White O."/>
            <person name="Wolf A.M."/>
            <person name="Vamathevan J.J."/>
            <person name="Weidman J.F."/>
            <person name="Impraim M."/>
            <person name="Lee K."/>
            <person name="Berry K.J."/>
            <person name="Lee C."/>
            <person name="Mueller J."/>
            <person name="Khouri H.M."/>
            <person name="Gill J."/>
            <person name="Utterback T.R."/>
            <person name="McDonald L.A."/>
            <person name="Feldblyum T.V."/>
            <person name="Smith H.O."/>
            <person name="Venter J.C."/>
            <person name="Nealson K.H."/>
            <person name="Fraser C.M."/>
        </authorList>
    </citation>
    <scope>NUCLEOTIDE SEQUENCE [LARGE SCALE GENOMIC DNA]</scope>
    <source>
        <strain>ATCC 700550 / JCM 31522 / CIP 106686 / LMG 19005 / NCIMB 14063 / MR-1</strain>
    </source>
</reference>
<evidence type="ECO:0000255" key="1">
    <source>
        <dbReference type="HAMAP-Rule" id="MF_00908"/>
    </source>
</evidence>
<sequence>MKYIEVDEELYRHIASKTERIGESASDILRRLLGLSVDTVEQAQPQAISQPSLEAATPEPQFVPQVETFVAAADFHQLVDEHKLEQQKGAVGRFLFLLESLYQLNKTQFAQILQIQGRDRLYFARSREELLKASATANPKEIGQTGFWVTTNNNTAKKRAILAEALVQFGCDAEIANGIAERV</sequence>
<keyword id="KW-0963">Cytoplasm</keyword>
<keyword id="KW-0236">DNA replication inhibitor</keyword>
<keyword id="KW-0238">DNA-binding</keyword>
<keyword id="KW-1185">Reference proteome</keyword>
<proteinExistence type="inferred from homology"/>
<feature type="chain" id="PRO_0000413939" description="Negative modulator of initiation of replication">
    <location>
        <begin position="1"/>
        <end position="183"/>
    </location>
</feature>
<feature type="region of interest" description="Interaction with DNA" evidence="1">
    <location>
        <begin position="90"/>
        <end position="91"/>
    </location>
</feature>
<protein>
    <recommendedName>
        <fullName evidence="1">Negative modulator of initiation of replication</fullName>
    </recommendedName>
</protein>